<proteinExistence type="evidence at protein level"/>
<accession>P0DJ40</accession>
<name>KKX41_HETPE</name>
<dbReference type="SMR" id="P0DJ40"/>
<dbReference type="GO" id="GO:0005576">
    <property type="term" value="C:extracellular region"/>
    <property type="evidence" value="ECO:0007669"/>
    <property type="project" value="UniProtKB-SubCell"/>
</dbReference>
<dbReference type="GO" id="GO:0015459">
    <property type="term" value="F:potassium channel regulator activity"/>
    <property type="evidence" value="ECO:0007669"/>
    <property type="project" value="UniProtKB-KW"/>
</dbReference>
<dbReference type="GO" id="GO:0090729">
    <property type="term" value="F:toxin activity"/>
    <property type="evidence" value="ECO:0007669"/>
    <property type="project" value="UniProtKB-KW"/>
</dbReference>
<organism>
    <name type="scientific">Heterometrus petersii</name>
    <name type="common">Asian forest scorpion</name>
    <dbReference type="NCBI Taxonomy" id="754296"/>
    <lineage>
        <taxon>Eukaryota</taxon>
        <taxon>Metazoa</taxon>
        <taxon>Ecdysozoa</taxon>
        <taxon>Arthropoda</taxon>
        <taxon>Chelicerata</taxon>
        <taxon>Arachnida</taxon>
        <taxon>Scorpiones</taxon>
        <taxon>Iurida</taxon>
        <taxon>Scorpionoidea</taxon>
        <taxon>Scorpionidae</taxon>
        <taxon>Heterometrinae</taxon>
        <taxon>Heterometrus</taxon>
    </lineage>
</organism>
<comment type="function">
    <text evidence="1">Potassium channel inhibitor (Kv).</text>
</comment>
<comment type="subcellular location">
    <subcellularLocation>
        <location evidence="1">Secreted</location>
    </subcellularLocation>
</comment>
<comment type="tissue specificity">
    <text evidence="6">Expressed by the venom gland.</text>
</comment>
<comment type="domain">
    <text evidence="2">Has the structural arrangement of two alpha-helices stabilized by disulfide bonds (CSalpha/alpha 2(S-S)).</text>
</comment>
<comment type="similarity">
    <text evidence="6">Belongs to the short scorpion toxin superfamily. Potassium channel inhibitor kappa-KTx family. Kappa-KTx 4 subfamily.</text>
</comment>
<reference key="1">
    <citation type="journal article" date="2010" name="Proteomics">
        <title>Molecular diversity of toxic components from the scorpion Heterometrus petersii venom revealed by proteomic and transcriptome analysis.</title>
        <authorList>
            <person name="Ma Y."/>
            <person name="Zhao Y."/>
            <person name="Zhao R."/>
            <person name="Zhang W."/>
            <person name="He Y."/>
            <person name="Wu Y."/>
            <person name="Cao Z."/>
            <person name="Guo L."/>
            <person name="Li W."/>
        </authorList>
    </citation>
    <scope>NUCLEOTIDE SEQUENCE [MRNA]</scope>
    <scope>IDENTIFICATION BY MASS SPECTROMETRY</scope>
    <source>
        <tissue>Venom</tissue>
        <tissue>Venom gland</tissue>
    </source>
</reference>
<reference key="2">
    <citation type="journal article" date="2012" name="Biochem. Pharmacol.">
        <title>Purification, molecular cloning and functional characterization of HelaTx1 (Heterometrus laoticus): the first member of a new kappa-KTX subfamily.</title>
        <authorList>
            <person name="Vandendriessche T."/>
            <person name="Kopljar I."/>
            <person name="Jenkins D.P."/>
            <person name="Diego-Garcia E."/>
            <person name="Abdel-Mottaleb Y."/>
            <person name="Vermassen E."/>
            <person name="Clynen E."/>
            <person name="Schoofs L."/>
            <person name="Wulff H."/>
            <person name="Snyders D."/>
            <person name="Tytgat J."/>
        </authorList>
    </citation>
    <scope>NOMENCLATURE</scope>
</reference>
<sequence length="64" mass="7517">MKSTLMTASLLILVVLFIIDYASVYAEFIDGEISLERERDIPCFETCMKLYHIPKLCYIKCRKH</sequence>
<protein>
    <recommendedName>
        <fullName evidence="5">Potassium channel toxin kappa-KTx 4.1</fullName>
    </recommendedName>
    <alternativeName>
        <fullName evidence="4">HSP040C.2</fullName>
    </alternativeName>
</protein>
<feature type="signal peptide" evidence="3">
    <location>
        <begin position="1"/>
        <end position="26"/>
    </location>
</feature>
<feature type="propeptide" id="PRO_0000416810" evidence="1">
    <location>
        <begin position="27"/>
        <end position="38"/>
    </location>
</feature>
<feature type="peptide" id="PRO_0000416811" description="Potassium channel toxin kappa-KTx 4.1">
    <location>
        <begin position="40"/>
        <end position="64"/>
    </location>
</feature>
<feature type="disulfide bond" evidence="2">
    <location>
        <begin position="43"/>
        <end position="61"/>
    </location>
</feature>
<feature type="disulfide bond" evidence="2">
    <location>
        <begin position="47"/>
        <end position="57"/>
    </location>
</feature>
<keyword id="KW-1015">Disulfide bond</keyword>
<keyword id="KW-0872">Ion channel impairing toxin</keyword>
<keyword id="KW-0528">Neurotoxin</keyword>
<keyword id="KW-0632">Potassium channel impairing toxin</keyword>
<keyword id="KW-0964">Secreted</keyword>
<keyword id="KW-0732">Signal</keyword>
<keyword id="KW-0800">Toxin</keyword>
<keyword id="KW-1220">Voltage-gated potassium channel impairing toxin</keyword>
<evidence type="ECO:0000250" key="1"/>
<evidence type="ECO:0000250" key="2">
    <source>
        <dbReference type="UniProtKB" id="P82850"/>
    </source>
</evidence>
<evidence type="ECO:0000255" key="3"/>
<evidence type="ECO:0000303" key="4">
    <source>
    </source>
</evidence>
<evidence type="ECO:0000303" key="5">
    <source>
    </source>
</evidence>
<evidence type="ECO:0000305" key="6"/>